<evidence type="ECO:0000255" key="1">
    <source>
        <dbReference type="HAMAP-Rule" id="MF_00381"/>
    </source>
</evidence>
<keyword id="KW-0233">DNA recombination</keyword>
<keyword id="KW-0238">DNA-binding</keyword>
<keyword id="KW-1185">Reference proteome</keyword>
<keyword id="KW-0804">Transcription</keyword>
<keyword id="KW-0805">Transcription regulation</keyword>
<keyword id="KW-0810">Translation regulation</keyword>
<sequence length="99" mass="11038">MTKSELIARLAERYPHLVAKDTELAVKTILDAMAVSLASGQRIEIRGFGSFDLNYRPPRTGRNPKSGSSVHVPEKFVPHFKAGKELRERVDTSSMLQEA</sequence>
<name>IHFB_LARHH</name>
<organism>
    <name type="scientific">Laribacter hongkongensis (strain HLHK9)</name>
    <dbReference type="NCBI Taxonomy" id="557598"/>
    <lineage>
        <taxon>Bacteria</taxon>
        <taxon>Pseudomonadati</taxon>
        <taxon>Pseudomonadota</taxon>
        <taxon>Betaproteobacteria</taxon>
        <taxon>Neisseriales</taxon>
        <taxon>Aquaspirillaceae</taxon>
        <taxon>Laribacter</taxon>
    </lineage>
</organism>
<protein>
    <recommendedName>
        <fullName evidence="1">Integration host factor subunit beta</fullName>
        <shortName evidence="1">IHF-beta</shortName>
    </recommendedName>
</protein>
<feature type="chain" id="PRO_1000190444" description="Integration host factor subunit beta">
    <location>
        <begin position="1"/>
        <end position="99"/>
    </location>
</feature>
<dbReference type="EMBL" id="CP001154">
    <property type="protein sequence ID" value="ACO73863.1"/>
    <property type="molecule type" value="Genomic_DNA"/>
</dbReference>
<dbReference type="RefSeq" id="WP_012696355.1">
    <property type="nucleotide sequence ID" value="NC_012559.1"/>
</dbReference>
<dbReference type="SMR" id="C1D546"/>
<dbReference type="STRING" id="557598.LHK_00870"/>
<dbReference type="KEGG" id="lhk:LHK_00870"/>
<dbReference type="eggNOG" id="COG0776">
    <property type="taxonomic scope" value="Bacteria"/>
</dbReference>
<dbReference type="HOGENOM" id="CLU_105066_2_0_4"/>
<dbReference type="Proteomes" id="UP000002010">
    <property type="component" value="Chromosome"/>
</dbReference>
<dbReference type="GO" id="GO:0005694">
    <property type="term" value="C:chromosome"/>
    <property type="evidence" value="ECO:0007669"/>
    <property type="project" value="InterPro"/>
</dbReference>
<dbReference type="GO" id="GO:0005829">
    <property type="term" value="C:cytosol"/>
    <property type="evidence" value="ECO:0007669"/>
    <property type="project" value="TreeGrafter"/>
</dbReference>
<dbReference type="GO" id="GO:0003677">
    <property type="term" value="F:DNA binding"/>
    <property type="evidence" value="ECO:0007669"/>
    <property type="project" value="UniProtKB-UniRule"/>
</dbReference>
<dbReference type="GO" id="GO:0030527">
    <property type="term" value="F:structural constituent of chromatin"/>
    <property type="evidence" value="ECO:0007669"/>
    <property type="project" value="InterPro"/>
</dbReference>
<dbReference type="GO" id="GO:0006310">
    <property type="term" value="P:DNA recombination"/>
    <property type="evidence" value="ECO:0007669"/>
    <property type="project" value="UniProtKB-UniRule"/>
</dbReference>
<dbReference type="GO" id="GO:0006355">
    <property type="term" value="P:regulation of DNA-templated transcription"/>
    <property type="evidence" value="ECO:0007669"/>
    <property type="project" value="UniProtKB-UniRule"/>
</dbReference>
<dbReference type="GO" id="GO:0006417">
    <property type="term" value="P:regulation of translation"/>
    <property type="evidence" value="ECO:0007669"/>
    <property type="project" value="UniProtKB-UniRule"/>
</dbReference>
<dbReference type="CDD" id="cd13836">
    <property type="entry name" value="IHF_B"/>
    <property type="match status" value="1"/>
</dbReference>
<dbReference type="FunFam" id="4.10.520.10:FF:000003">
    <property type="entry name" value="Integration host factor subunit beta"/>
    <property type="match status" value="1"/>
</dbReference>
<dbReference type="Gene3D" id="4.10.520.10">
    <property type="entry name" value="IHF-like DNA-binding proteins"/>
    <property type="match status" value="1"/>
</dbReference>
<dbReference type="HAMAP" id="MF_00381">
    <property type="entry name" value="IHF_beta"/>
    <property type="match status" value="1"/>
</dbReference>
<dbReference type="InterPro" id="IPR000119">
    <property type="entry name" value="Hist_DNA-bd"/>
</dbReference>
<dbReference type="InterPro" id="IPR010992">
    <property type="entry name" value="IHF-like_DNA-bd_dom_sf"/>
</dbReference>
<dbReference type="InterPro" id="IPR005685">
    <property type="entry name" value="IHF_beta"/>
</dbReference>
<dbReference type="NCBIfam" id="TIGR00988">
    <property type="entry name" value="hip"/>
    <property type="match status" value="1"/>
</dbReference>
<dbReference type="NCBIfam" id="NF001222">
    <property type="entry name" value="PRK00199.1"/>
    <property type="match status" value="1"/>
</dbReference>
<dbReference type="PANTHER" id="PTHR33175">
    <property type="entry name" value="DNA-BINDING PROTEIN HU"/>
    <property type="match status" value="1"/>
</dbReference>
<dbReference type="PANTHER" id="PTHR33175:SF5">
    <property type="entry name" value="INTEGRATION HOST FACTOR SUBUNIT BETA"/>
    <property type="match status" value="1"/>
</dbReference>
<dbReference type="Pfam" id="PF00216">
    <property type="entry name" value="Bac_DNA_binding"/>
    <property type="match status" value="1"/>
</dbReference>
<dbReference type="PRINTS" id="PR01727">
    <property type="entry name" value="DNABINDINGHU"/>
</dbReference>
<dbReference type="SMART" id="SM00411">
    <property type="entry name" value="BHL"/>
    <property type="match status" value="1"/>
</dbReference>
<dbReference type="SUPFAM" id="SSF47729">
    <property type="entry name" value="IHF-like DNA-binding proteins"/>
    <property type="match status" value="1"/>
</dbReference>
<reference key="1">
    <citation type="journal article" date="2009" name="PLoS Genet.">
        <title>The complete genome and proteome of Laribacter hongkongensis reveal potential mechanisms for adaptations to different temperatures and habitats.</title>
        <authorList>
            <person name="Woo P.C.Y."/>
            <person name="Lau S.K.P."/>
            <person name="Tse H."/>
            <person name="Teng J.L.L."/>
            <person name="Curreem S.O."/>
            <person name="Tsang A.K.L."/>
            <person name="Fan R.Y.Y."/>
            <person name="Wong G.K.M."/>
            <person name="Huang Y."/>
            <person name="Loman N.J."/>
            <person name="Snyder L.A.S."/>
            <person name="Cai J.J."/>
            <person name="Huang J.-D."/>
            <person name="Mak W."/>
            <person name="Pallen M.J."/>
            <person name="Lok S."/>
            <person name="Yuen K.-Y."/>
        </authorList>
    </citation>
    <scope>NUCLEOTIDE SEQUENCE [LARGE SCALE GENOMIC DNA]</scope>
    <source>
        <strain>HLHK9</strain>
    </source>
</reference>
<proteinExistence type="inferred from homology"/>
<accession>C1D546</accession>
<comment type="function">
    <text evidence="1">This protein is one of the two subunits of integration host factor, a specific DNA-binding protein that functions in genetic recombination as well as in transcriptional and translational control.</text>
</comment>
<comment type="subunit">
    <text evidence="1">Heterodimer of an alpha and a beta chain.</text>
</comment>
<comment type="similarity">
    <text evidence="1">Belongs to the bacterial histone-like protein family.</text>
</comment>
<gene>
    <name evidence="1" type="primary">ihfB</name>
    <name evidence="1" type="synonym">himD</name>
    <name type="ordered locus">LHK_00870</name>
</gene>